<dbReference type="EC" id="1.14.-.-"/>
<dbReference type="EMBL" id="AF022458">
    <property type="protein sequence ID" value="AAB94587.1"/>
    <property type="molecule type" value="mRNA"/>
</dbReference>
<dbReference type="PIR" id="T05937">
    <property type="entry name" value="T05937"/>
</dbReference>
<dbReference type="RefSeq" id="NP_001235563.1">
    <property type="nucleotide sequence ID" value="NM_001248634.1"/>
</dbReference>
<dbReference type="SMR" id="O48922"/>
<dbReference type="FunCoup" id="O48922">
    <property type="interactions" value="1019"/>
</dbReference>
<dbReference type="STRING" id="3847.O48922"/>
<dbReference type="PaxDb" id="3847-GLYMA19G30600.1"/>
<dbReference type="EnsemblPlants" id="KRG95042">
    <property type="protein sequence ID" value="KRG95042"/>
    <property type="gene ID" value="GLYMA_19G126000"/>
</dbReference>
<dbReference type="GeneID" id="606506"/>
<dbReference type="Gramene" id="KRG95042">
    <property type="protein sequence ID" value="KRG95042"/>
    <property type="gene ID" value="GLYMA_19G126000"/>
</dbReference>
<dbReference type="KEGG" id="gmx:606506"/>
<dbReference type="eggNOG" id="KOG0156">
    <property type="taxonomic scope" value="Eukaryota"/>
</dbReference>
<dbReference type="HOGENOM" id="CLU_001570_4_0_1"/>
<dbReference type="InParanoid" id="O48922"/>
<dbReference type="OMA" id="AKWEIFL"/>
<dbReference type="OrthoDB" id="2789670at2759"/>
<dbReference type="Proteomes" id="UP000008827">
    <property type="component" value="Chromosome 19"/>
</dbReference>
<dbReference type="GO" id="GO:0016020">
    <property type="term" value="C:membrane"/>
    <property type="evidence" value="ECO:0000318"/>
    <property type="project" value="GO_Central"/>
</dbReference>
<dbReference type="GO" id="GO:0020037">
    <property type="term" value="F:heme binding"/>
    <property type="evidence" value="ECO:0007669"/>
    <property type="project" value="InterPro"/>
</dbReference>
<dbReference type="GO" id="GO:0005506">
    <property type="term" value="F:iron ion binding"/>
    <property type="evidence" value="ECO:0007669"/>
    <property type="project" value="InterPro"/>
</dbReference>
<dbReference type="GO" id="GO:0016709">
    <property type="term" value="F:oxidoreductase activity, acting on paired donors, with incorporation or reduction of molecular oxygen, NAD(P)H as one donor, and incorporation of one atom of oxygen"/>
    <property type="evidence" value="ECO:0000318"/>
    <property type="project" value="GO_Central"/>
</dbReference>
<dbReference type="CDD" id="cd20656">
    <property type="entry name" value="CYP98"/>
    <property type="match status" value="1"/>
</dbReference>
<dbReference type="FunFam" id="1.10.630.10:FF:000039">
    <property type="entry name" value="Cytochrome P450"/>
    <property type="match status" value="1"/>
</dbReference>
<dbReference type="Gene3D" id="1.10.630.10">
    <property type="entry name" value="Cytochrome P450"/>
    <property type="match status" value="1"/>
</dbReference>
<dbReference type="InterPro" id="IPR001128">
    <property type="entry name" value="Cyt_P450"/>
</dbReference>
<dbReference type="InterPro" id="IPR017972">
    <property type="entry name" value="Cyt_P450_CS"/>
</dbReference>
<dbReference type="InterPro" id="IPR002401">
    <property type="entry name" value="Cyt_P450_E_grp-I"/>
</dbReference>
<dbReference type="InterPro" id="IPR036396">
    <property type="entry name" value="Cyt_P450_sf"/>
</dbReference>
<dbReference type="PANTHER" id="PTHR47944">
    <property type="entry name" value="CYTOCHROME P450 98A9"/>
    <property type="match status" value="1"/>
</dbReference>
<dbReference type="PANTHER" id="PTHR47944:SF10">
    <property type="entry name" value="CYTOCHROME P450 98A9"/>
    <property type="match status" value="1"/>
</dbReference>
<dbReference type="Pfam" id="PF00067">
    <property type="entry name" value="p450"/>
    <property type="match status" value="1"/>
</dbReference>
<dbReference type="PRINTS" id="PR00463">
    <property type="entry name" value="EP450I"/>
</dbReference>
<dbReference type="PRINTS" id="PR00385">
    <property type="entry name" value="P450"/>
</dbReference>
<dbReference type="SUPFAM" id="SSF48264">
    <property type="entry name" value="Cytochrome P450"/>
    <property type="match status" value="1"/>
</dbReference>
<dbReference type="PROSITE" id="PS00086">
    <property type="entry name" value="CYTOCHROME_P450"/>
    <property type="match status" value="1"/>
</dbReference>
<comment type="cofactor">
    <cofactor evidence="1">
        <name>heme</name>
        <dbReference type="ChEBI" id="CHEBI:30413"/>
    </cofactor>
</comment>
<comment type="subcellular location">
    <subcellularLocation>
        <location evidence="3">Membrane</location>
        <topology evidence="3">Single-pass membrane protein</topology>
    </subcellularLocation>
</comment>
<comment type="similarity">
    <text evidence="3">Belongs to the cytochrome P450 family.</text>
</comment>
<proteinExistence type="evidence at transcript level"/>
<gene>
    <name type="primary">CYP98A2</name>
</gene>
<accession>O48922</accession>
<feature type="chain" id="PRO_0000052198" description="Cytochrome P450 98A2">
    <location>
        <begin position="1"/>
        <end position="509"/>
    </location>
</feature>
<feature type="transmembrane region" description="Helical" evidence="2">
    <location>
        <begin position="2"/>
        <end position="21"/>
    </location>
</feature>
<feature type="binding site" description="axial binding residue" evidence="1">
    <location>
        <position position="439"/>
    </location>
    <ligand>
        <name>heme</name>
        <dbReference type="ChEBI" id="CHEBI:30413"/>
    </ligand>
    <ligandPart>
        <name>Fe</name>
        <dbReference type="ChEBI" id="CHEBI:18248"/>
    </ligandPart>
</feature>
<protein>
    <recommendedName>
        <fullName>Cytochrome P450 98A2</fullName>
        <ecNumber>1.14.-.-</ecNumber>
    </recommendedName>
</protein>
<sequence length="509" mass="57675">MALLLIIPISLVTLWLGYTLYQRLRFKLPPGPRPWPVVGNLYDIKPVRFRCFAEWAQSYGPIISVWFGSTLNVIVSNSELAKEVLKEHDQLLADRHRSRSAAKFSRDGKDLIWADYGPHYVKVRKVCTLELFSPKRLEALRPIREDEVTSMVDSVYNHCTSTENLGKGILLRKHLGVVAFNNITRLAFGKRFVNSEGVMDEQGVEFKAIVENGLKLGASLAMAEHIPWLRWMFPLEEGAFAKHGARRDRLTRAIMAEHTEARKKSGGAKQHFVDALLTLQDKYDLSEDTIIGLLWDMITAGMDTTAISVEWAMAELIRNPRVQQKVQEELDRVIGLERVMTEADFSNLPYLQCVTKEAMRLHPPTPLMLPHRANANVKVGGYDIPKGSNVHVNVWAVARDPAVWKDPLEFRPERFLEEDVDMKGHDFRLLPFGSGRRVCPGAQLGINLAASMLGHLLHHFCWTPPEGMKPEEIDMGENPGLVTYMRTPIQAVVSPRLPSHLYKRVPAEI</sequence>
<name>C98A2_SOYBN</name>
<reference key="1">
    <citation type="submission" date="1997-09" db="EMBL/GenBank/DDBJ databases">
        <authorList>
            <person name="Siminszky B."/>
            <person name="Dewey R.E."/>
            <person name="Corbin F.T."/>
        </authorList>
    </citation>
    <scope>NUCLEOTIDE SEQUENCE [MRNA]</scope>
</reference>
<organism>
    <name type="scientific">Glycine max</name>
    <name type="common">Soybean</name>
    <name type="synonym">Glycine hispida</name>
    <dbReference type="NCBI Taxonomy" id="3847"/>
    <lineage>
        <taxon>Eukaryota</taxon>
        <taxon>Viridiplantae</taxon>
        <taxon>Streptophyta</taxon>
        <taxon>Embryophyta</taxon>
        <taxon>Tracheophyta</taxon>
        <taxon>Spermatophyta</taxon>
        <taxon>Magnoliopsida</taxon>
        <taxon>eudicotyledons</taxon>
        <taxon>Gunneridae</taxon>
        <taxon>Pentapetalae</taxon>
        <taxon>rosids</taxon>
        <taxon>fabids</taxon>
        <taxon>Fabales</taxon>
        <taxon>Fabaceae</taxon>
        <taxon>Papilionoideae</taxon>
        <taxon>50 kb inversion clade</taxon>
        <taxon>NPAAA clade</taxon>
        <taxon>indigoferoid/millettioid clade</taxon>
        <taxon>Phaseoleae</taxon>
        <taxon>Glycine</taxon>
        <taxon>Glycine subgen. Soja</taxon>
    </lineage>
</organism>
<evidence type="ECO:0000250" key="1"/>
<evidence type="ECO:0000255" key="2"/>
<evidence type="ECO:0000305" key="3"/>
<keyword id="KW-0349">Heme</keyword>
<keyword id="KW-0408">Iron</keyword>
<keyword id="KW-0472">Membrane</keyword>
<keyword id="KW-0479">Metal-binding</keyword>
<keyword id="KW-0503">Monooxygenase</keyword>
<keyword id="KW-0560">Oxidoreductase</keyword>
<keyword id="KW-1185">Reference proteome</keyword>
<keyword id="KW-0812">Transmembrane</keyword>
<keyword id="KW-1133">Transmembrane helix</keyword>